<keyword id="KW-0007">Acetylation</keyword>
<keyword id="KW-0539">Nucleus</keyword>
<keyword id="KW-0597">Phosphoprotein</keyword>
<keyword id="KW-1185">Reference proteome</keyword>
<accession>Q4QQT2</accession>
<protein>
    <recommendedName>
        <fullName>Protein FAM118B</fullName>
    </recommendedName>
</protein>
<gene>
    <name type="primary">Fam118b</name>
</gene>
<dbReference type="EMBL" id="BC098017">
    <property type="protein sequence ID" value="AAH98017.1"/>
    <property type="molecule type" value="mRNA"/>
</dbReference>
<dbReference type="RefSeq" id="NP_001020454.1">
    <property type="nucleotide sequence ID" value="NM_001025283.2"/>
</dbReference>
<dbReference type="RefSeq" id="XP_006242846.1">
    <property type="nucleotide sequence ID" value="XM_006242784.5"/>
</dbReference>
<dbReference type="RefSeq" id="XP_008764278.1">
    <property type="nucleotide sequence ID" value="XM_008766056.2"/>
</dbReference>
<dbReference type="RefSeq" id="XP_038937328.1">
    <property type="nucleotide sequence ID" value="XM_039081400.2"/>
</dbReference>
<dbReference type="SMR" id="Q4QQT2"/>
<dbReference type="FunCoup" id="Q4QQT2">
    <property type="interactions" value="1488"/>
</dbReference>
<dbReference type="STRING" id="10116.ENSRNOP00000015366"/>
<dbReference type="PhosphoSitePlus" id="Q4QQT2"/>
<dbReference type="jPOST" id="Q4QQT2"/>
<dbReference type="PaxDb" id="10116-ENSRNOP00000015366"/>
<dbReference type="Ensembl" id="ENSRNOT00000015366.8">
    <property type="protein sequence ID" value="ENSRNOP00000015366.6"/>
    <property type="gene ID" value="ENSRNOG00000011543.8"/>
</dbReference>
<dbReference type="GeneID" id="315549"/>
<dbReference type="KEGG" id="rno:315549"/>
<dbReference type="UCSC" id="RGD:1307173">
    <property type="organism name" value="rat"/>
</dbReference>
<dbReference type="AGR" id="RGD:1307173"/>
<dbReference type="CTD" id="79607"/>
<dbReference type="RGD" id="1307173">
    <property type="gene designation" value="Fam118b"/>
</dbReference>
<dbReference type="eggNOG" id="ENOG502QSNY">
    <property type="taxonomic scope" value="Eukaryota"/>
</dbReference>
<dbReference type="GeneTree" id="ENSGT00390000010215"/>
<dbReference type="HOGENOM" id="CLU_063072_0_0_1"/>
<dbReference type="InParanoid" id="Q4QQT2"/>
<dbReference type="OMA" id="WGKQNEL"/>
<dbReference type="PhylomeDB" id="Q4QQT2"/>
<dbReference type="PRO" id="PR:Q4QQT2"/>
<dbReference type="Proteomes" id="UP000002494">
    <property type="component" value="Chromosome 8"/>
</dbReference>
<dbReference type="Bgee" id="ENSRNOG00000011543">
    <property type="expression patterns" value="Expressed in duodenum and 19 other cell types or tissues"/>
</dbReference>
<dbReference type="GO" id="GO:0015030">
    <property type="term" value="C:Cajal body"/>
    <property type="evidence" value="ECO:0007669"/>
    <property type="project" value="UniProtKB-SubCell"/>
</dbReference>
<dbReference type="GO" id="GO:0042802">
    <property type="term" value="F:identical protein binding"/>
    <property type="evidence" value="ECO:0000266"/>
    <property type="project" value="RGD"/>
</dbReference>
<dbReference type="InterPro" id="IPR038916">
    <property type="entry name" value="FAM118"/>
</dbReference>
<dbReference type="PANTHER" id="PTHR28623">
    <property type="entry name" value="PROTEIN FAM118B"/>
    <property type="match status" value="1"/>
</dbReference>
<dbReference type="PANTHER" id="PTHR28623:SF1">
    <property type="entry name" value="PROTEIN FAM118B"/>
    <property type="match status" value="1"/>
</dbReference>
<dbReference type="Pfam" id="PF13289">
    <property type="entry name" value="SIR2_2"/>
    <property type="match status" value="1"/>
</dbReference>
<proteinExistence type="evidence at transcript level"/>
<comment type="function">
    <text evidence="1">May play a role in Cajal bodies formation.</text>
</comment>
<comment type="subcellular location">
    <subcellularLocation>
        <location evidence="1">Nucleus</location>
        <location evidence="1">Cajal body</location>
    </subcellularLocation>
</comment>
<comment type="similarity">
    <text evidence="3">Belongs to the FAM118 family.</text>
</comment>
<sequence length="350" mass="39423">MASTGSQASDIDKIFGFFNDGEPPTKKPRKLLPSLKTKKPRELVLVIGTGISAAVAPQVPALKSWKGLIQALLDAAIDFDLLEDEESKKFQKCLHEDKNLVHVAHDLIQKLSPRTSNVRSTFFKDCLYEVFDDLESKMEDSGKQLLQSVLHLMENGALVLTTNFDNLLELYAADQGKQLESLDLTDEKKVLEWAQEKRKLSVLHIHGVYTNPSGIVLHPAGYQNVLRNTEVMREIQKLYENKSFLFLGCGWTVDDTTFQALFLEAVKHKSDLEHFMLVRRGDVDEFKKLRENMLDKGIKVISYGNDYADLPEYFKRLTCEISTRGRSGMAREGQLNGSSAAHGEIRGCST</sequence>
<organism>
    <name type="scientific">Rattus norvegicus</name>
    <name type="common">Rat</name>
    <dbReference type="NCBI Taxonomy" id="10116"/>
    <lineage>
        <taxon>Eukaryota</taxon>
        <taxon>Metazoa</taxon>
        <taxon>Chordata</taxon>
        <taxon>Craniata</taxon>
        <taxon>Vertebrata</taxon>
        <taxon>Euteleostomi</taxon>
        <taxon>Mammalia</taxon>
        <taxon>Eutheria</taxon>
        <taxon>Euarchontoglires</taxon>
        <taxon>Glires</taxon>
        <taxon>Rodentia</taxon>
        <taxon>Myomorpha</taxon>
        <taxon>Muroidea</taxon>
        <taxon>Muridae</taxon>
        <taxon>Murinae</taxon>
        <taxon>Rattus</taxon>
    </lineage>
</organism>
<name>F118B_RAT</name>
<reference key="1">
    <citation type="journal article" date="2004" name="Genome Res.">
        <title>The status, quality, and expansion of the NIH full-length cDNA project: the Mammalian Gene Collection (MGC).</title>
        <authorList>
            <consortium name="The MGC Project Team"/>
        </authorList>
    </citation>
    <scope>NUCLEOTIDE SEQUENCE [LARGE SCALE MRNA]</scope>
    <source>
        <tissue>Testis</tissue>
    </source>
</reference>
<feature type="initiator methionine" description="Removed" evidence="1">
    <location>
        <position position="1"/>
    </location>
</feature>
<feature type="chain" id="PRO_0000295106" description="Protein FAM118B">
    <location>
        <begin position="2"/>
        <end position="350"/>
    </location>
</feature>
<feature type="region of interest" description="Disordered" evidence="2">
    <location>
        <begin position="330"/>
        <end position="350"/>
    </location>
</feature>
<feature type="modified residue" description="N-acetylalanine" evidence="1">
    <location>
        <position position="2"/>
    </location>
</feature>
<feature type="modified residue" description="Phosphoserine" evidence="1">
    <location>
        <position position="9"/>
    </location>
</feature>
<evidence type="ECO:0000250" key="1">
    <source>
        <dbReference type="UniProtKB" id="Q9BPY3"/>
    </source>
</evidence>
<evidence type="ECO:0000256" key="2">
    <source>
        <dbReference type="SAM" id="MobiDB-lite"/>
    </source>
</evidence>
<evidence type="ECO:0000305" key="3"/>